<dbReference type="EC" id="2.3.1.282" evidence="2"/>
<dbReference type="EMBL" id="AM408590">
    <property type="protein sequence ID" value="CAL72950.1"/>
    <property type="molecule type" value="Genomic_DNA"/>
</dbReference>
<dbReference type="RefSeq" id="WP_003414853.1">
    <property type="nucleotide sequence ID" value="NC_008769.1"/>
</dbReference>
<dbReference type="SMR" id="A1KMT4"/>
<dbReference type="KEGG" id="mbb:BCG_2961"/>
<dbReference type="HOGENOM" id="CLU_050374_1_0_11"/>
<dbReference type="Proteomes" id="UP000001472">
    <property type="component" value="Chromosome"/>
</dbReference>
<dbReference type="GO" id="GO:0016746">
    <property type="term" value="F:acyltransferase activity"/>
    <property type="evidence" value="ECO:0007669"/>
    <property type="project" value="UniProtKB-KW"/>
</dbReference>
<dbReference type="GO" id="GO:0006629">
    <property type="term" value="P:lipid metabolic process"/>
    <property type="evidence" value="ECO:0007669"/>
    <property type="project" value="UniProtKB-KW"/>
</dbReference>
<dbReference type="Gene3D" id="3.30.559.10">
    <property type="entry name" value="Chloramphenicol acetyltransferase-like domain"/>
    <property type="match status" value="1"/>
</dbReference>
<dbReference type="Gene3D" id="3.30.559.30">
    <property type="entry name" value="Nonribosomal peptide synthetase, condensation domain"/>
    <property type="match status" value="1"/>
</dbReference>
<dbReference type="InterPro" id="IPR023213">
    <property type="entry name" value="CAT-like_dom_sf"/>
</dbReference>
<dbReference type="InterPro" id="IPR031641">
    <property type="entry name" value="PapA_C"/>
</dbReference>
<dbReference type="NCBIfam" id="NF006788">
    <property type="entry name" value="PRK09294.1-2"/>
    <property type="match status" value="1"/>
</dbReference>
<dbReference type="Pfam" id="PF16911">
    <property type="entry name" value="PapA_C"/>
    <property type="match status" value="1"/>
</dbReference>
<dbReference type="SUPFAM" id="SSF52777">
    <property type="entry name" value="CoA-dependent acyltransferases"/>
    <property type="match status" value="2"/>
</dbReference>
<name>PAPA5_MYCBP</name>
<reference key="1">
    <citation type="journal article" date="2007" name="Proc. Natl. Acad. Sci. U.S.A.">
        <title>Genome plasticity of BCG and impact on vaccine efficacy.</title>
        <authorList>
            <person name="Brosch R."/>
            <person name="Gordon S.V."/>
            <person name="Garnier T."/>
            <person name="Eiglmeier K."/>
            <person name="Frigui W."/>
            <person name="Valenti P."/>
            <person name="Dos Santos S."/>
            <person name="Duthoy S."/>
            <person name="Lacroix C."/>
            <person name="Garcia-Pelayo C."/>
            <person name="Inwald J.K."/>
            <person name="Golby P."/>
            <person name="Garcia J.N."/>
            <person name="Hewinson R.G."/>
            <person name="Behr M.A."/>
            <person name="Quail M.A."/>
            <person name="Churcher C."/>
            <person name="Barrell B.G."/>
            <person name="Parkhill J."/>
            <person name="Cole S.T."/>
        </authorList>
    </citation>
    <scope>NUCLEOTIDE SEQUENCE [LARGE SCALE GENOMIC DNA]</scope>
    <source>
        <strain>BCG / Pasteur 1173P2</strain>
    </source>
</reference>
<keyword id="KW-0012">Acyltransferase</keyword>
<keyword id="KW-0444">Lipid biosynthesis</keyword>
<keyword id="KW-0443">Lipid metabolism</keyword>
<keyword id="KW-0808">Transferase</keyword>
<evidence type="ECO:0000250" key="1"/>
<evidence type="ECO:0000250" key="2">
    <source>
        <dbReference type="UniProtKB" id="P9WIN5"/>
    </source>
</evidence>
<evidence type="ECO:0000305" key="3"/>
<accession>A1KMT4</accession>
<gene>
    <name type="primary">papA5</name>
    <name type="ordered locus">BCG_2961</name>
</gene>
<comment type="function">
    <text evidence="2">Catalyzes diesterification of phthiocerol, phthiodiolone, and phenolphthiocerol with mycocerosic acids, the final step in the phthiocerol, phthiodiolone and phenolphthiocerol dimycocerosate esters (PDIM) synthesis. Can directly transfer the mycocerosate bound to the mycocerosic acid synthase (mas) onto the substrate alcohols.</text>
</comment>
<comment type="catalytic activity">
    <reaction evidence="2">
        <text>2 a mycocerosyl-[mycocerosic acid synthase] + a phthiocerol = a dimycocerosyl phthiocerol + 2 holo-[mycocerosic acid synthase].</text>
        <dbReference type="EC" id="2.3.1.282"/>
    </reaction>
</comment>
<comment type="catalytic activity">
    <reaction evidence="2">
        <text>2 a mycocerosyl-[mycocerosic acid synthase] + a phthiodiolone = a dimycocerosyl phthiodiolone + 2 holo-[mycocerosic acid synthase].</text>
        <dbReference type="EC" id="2.3.1.282"/>
    </reaction>
</comment>
<comment type="catalytic activity">
    <reaction evidence="2">
        <text>2 a mycocerosyl-[mycocerosic acid synthase] + a phenolphthiocerol = a dimycocerosyl phenolphthiocerol + 2 holo-[mycocerosic acid synthase].</text>
        <dbReference type="EC" id="2.3.1.282"/>
    </reaction>
</comment>
<comment type="subunit">
    <text evidence="2">Monomer. Interacts directly with the acyl carrier protein (ACP) domain of the mycocerosic acid synthase (mas) protein.</text>
</comment>
<comment type="domain">
    <text evidence="2">Consists of two structural domains that are related to each other.</text>
</comment>
<comment type="similarity">
    <text evidence="3">Belongs to the acyltransferase PapA5 family.</text>
</comment>
<sequence length="422" mass="45429">MFPGSVIRKLSHSEEVFAQYEVFTSMTIQLRGVIDVDALSDAFDALLETHPVLASHLEQSSDGGWNLVADDLLHSGICVIDGTAATNGSPSGNAELRLDQSVSLLHLQLILREGGAELTLYLHHCMADGHHGAVLVDELFSRYTDAVTTGDPGPITPQPTPLSMEAVLAQRGIRKQGLSGAERFMSVMYAYEIPATETPAVLAHPGLPQAVPVTRLWLSKQQTSDLMAFGREHRLSLNAVVAAAILLTEWQLRNTPHVPIPYVYPVDLRFVLAPPVAPTEATNLLGAASYLAEIGPNTDIVDLASDIVATLRADLANGVIQQSGLHFGTAFEGTPPGLPPLVFCTDATSFPTMRTPPGLEIEDIKGQFYCSISVPLDLYSCAVYAGQLIIEHHGHIAEPGKSLEAIRSLLCTVPSEYGWIME</sequence>
<proteinExistence type="inferred from homology"/>
<protein>
    <recommendedName>
        <fullName>Phthiocerol/phthiodiolone dimycocerosyl transferase</fullName>
        <ecNumber evidence="2">2.3.1.282</ecNumber>
    </recommendedName>
    <alternativeName>
        <fullName>Acyltransferase PapA5</fullName>
    </alternativeName>
    <alternativeName>
        <fullName>Phthiocerol/phthiodiolone O-acyltransferase</fullName>
    </alternativeName>
    <alternativeName>
        <fullName>Polyketide synthase-associated protein A5</fullName>
    </alternativeName>
</protein>
<organism>
    <name type="scientific">Mycobacterium bovis (strain BCG / Pasteur 1173P2)</name>
    <dbReference type="NCBI Taxonomy" id="410289"/>
    <lineage>
        <taxon>Bacteria</taxon>
        <taxon>Bacillati</taxon>
        <taxon>Actinomycetota</taxon>
        <taxon>Actinomycetes</taxon>
        <taxon>Mycobacteriales</taxon>
        <taxon>Mycobacteriaceae</taxon>
        <taxon>Mycobacterium</taxon>
        <taxon>Mycobacterium tuberculosis complex</taxon>
    </lineage>
</organism>
<feature type="chain" id="PRO_0000332103" description="Phthiocerol/phthiodiolone dimycocerosyl transferase">
    <location>
        <begin position="1"/>
        <end position="422"/>
    </location>
</feature>
<feature type="active site" description="Proton acceptor" evidence="1">
    <location>
        <position position="124"/>
    </location>
</feature>
<feature type="site" description="Structural role in the organization of the active site" evidence="1">
    <location>
        <position position="128"/>
    </location>
</feature>
<feature type="site" description="Important for mas ACP domain recognition" evidence="1">
    <location>
        <position position="312"/>
    </location>
</feature>